<reference key="1">
    <citation type="journal article" date="2006" name="J. Bacteriol.">
        <title>Complete genome sequence of Yersinia pestis strains Antiqua and Nepal516: evidence of gene reduction in an emerging pathogen.</title>
        <authorList>
            <person name="Chain P.S.G."/>
            <person name="Hu P."/>
            <person name="Malfatti S.A."/>
            <person name="Radnedge L."/>
            <person name="Larimer F."/>
            <person name="Vergez L.M."/>
            <person name="Worsham P."/>
            <person name="Chu M.C."/>
            <person name="Andersen G.L."/>
        </authorList>
    </citation>
    <scope>NUCLEOTIDE SEQUENCE [LARGE SCALE GENOMIC DNA]</scope>
    <source>
        <strain>Antiqua</strain>
    </source>
</reference>
<feature type="chain" id="PRO_0000259243" description="Large ribosomal subunit protein bL31">
    <location>
        <begin position="1"/>
        <end position="71"/>
    </location>
</feature>
<feature type="binding site" evidence="1">
    <location>
        <position position="16"/>
    </location>
    <ligand>
        <name>Zn(2+)</name>
        <dbReference type="ChEBI" id="CHEBI:29105"/>
    </ligand>
</feature>
<feature type="binding site" evidence="1">
    <location>
        <position position="18"/>
    </location>
    <ligand>
        <name>Zn(2+)</name>
        <dbReference type="ChEBI" id="CHEBI:29105"/>
    </ligand>
</feature>
<feature type="binding site" evidence="1">
    <location>
        <position position="37"/>
    </location>
    <ligand>
        <name>Zn(2+)</name>
        <dbReference type="ChEBI" id="CHEBI:29105"/>
    </ligand>
</feature>
<feature type="binding site" evidence="1">
    <location>
        <position position="40"/>
    </location>
    <ligand>
        <name>Zn(2+)</name>
        <dbReference type="ChEBI" id="CHEBI:29105"/>
    </ligand>
</feature>
<name>RL31_YERPA</name>
<organism>
    <name type="scientific">Yersinia pestis bv. Antiqua (strain Antiqua)</name>
    <dbReference type="NCBI Taxonomy" id="360102"/>
    <lineage>
        <taxon>Bacteria</taxon>
        <taxon>Pseudomonadati</taxon>
        <taxon>Pseudomonadota</taxon>
        <taxon>Gammaproteobacteria</taxon>
        <taxon>Enterobacterales</taxon>
        <taxon>Yersiniaceae</taxon>
        <taxon>Yersinia</taxon>
    </lineage>
</organism>
<proteinExistence type="inferred from homology"/>
<sequence>MKQGIHPKYEQVTASCSCGNVIKINSTVGHDLNLDVCGECHPFYTGKQRDVASGGRVDRFNKRFSVPGAKK</sequence>
<dbReference type="EMBL" id="CP000308">
    <property type="protein sequence ID" value="ABG12229.1"/>
    <property type="molecule type" value="Genomic_DNA"/>
</dbReference>
<dbReference type="RefSeq" id="WP_002216737.1">
    <property type="nucleotide sequence ID" value="NZ_CP009906.1"/>
</dbReference>
<dbReference type="SMR" id="Q1CBE3"/>
<dbReference type="GeneID" id="96663581"/>
<dbReference type="KEGG" id="ypa:YPA_0260"/>
<dbReference type="Proteomes" id="UP000001971">
    <property type="component" value="Chromosome"/>
</dbReference>
<dbReference type="GO" id="GO:1990904">
    <property type="term" value="C:ribonucleoprotein complex"/>
    <property type="evidence" value="ECO:0007669"/>
    <property type="project" value="UniProtKB-KW"/>
</dbReference>
<dbReference type="GO" id="GO:0005840">
    <property type="term" value="C:ribosome"/>
    <property type="evidence" value="ECO:0007669"/>
    <property type="project" value="UniProtKB-KW"/>
</dbReference>
<dbReference type="GO" id="GO:0046872">
    <property type="term" value="F:metal ion binding"/>
    <property type="evidence" value="ECO:0007669"/>
    <property type="project" value="UniProtKB-KW"/>
</dbReference>
<dbReference type="GO" id="GO:0019843">
    <property type="term" value="F:rRNA binding"/>
    <property type="evidence" value="ECO:0007669"/>
    <property type="project" value="UniProtKB-KW"/>
</dbReference>
<dbReference type="GO" id="GO:0003735">
    <property type="term" value="F:structural constituent of ribosome"/>
    <property type="evidence" value="ECO:0007669"/>
    <property type="project" value="InterPro"/>
</dbReference>
<dbReference type="GO" id="GO:0006412">
    <property type="term" value="P:translation"/>
    <property type="evidence" value="ECO:0007669"/>
    <property type="project" value="UniProtKB-UniRule"/>
</dbReference>
<dbReference type="FunFam" id="4.10.830.30:FF:000001">
    <property type="entry name" value="50S ribosomal protein L31"/>
    <property type="match status" value="1"/>
</dbReference>
<dbReference type="Gene3D" id="4.10.830.30">
    <property type="entry name" value="Ribosomal protein L31"/>
    <property type="match status" value="1"/>
</dbReference>
<dbReference type="HAMAP" id="MF_00501">
    <property type="entry name" value="Ribosomal_bL31_1"/>
    <property type="match status" value="1"/>
</dbReference>
<dbReference type="InterPro" id="IPR034704">
    <property type="entry name" value="Ribosomal_bL28/bL31-like_sf"/>
</dbReference>
<dbReference type="InterPro" id="IPR002150">
    <property type="entry name" value="Ribosomal_bL31"/>
</dbReference>
<dbReference type="InterPro" id="IPR027491">
    <property type="entry name" value="Ribosomal_bL31_A"/>
</dbReference>
<dbReference type="InterPro" id="IPR042105">
    <property type="entry name" value="Ribosomal_bL31_sf"/>
</dbReference>
<dbReference type="NCBIfam" id="TIGR00105">
    <property type="entry name" value="L31"/>
    <property type="match status" value="1"/>
</dbReference>
<dbReference type="NCBIfam" id="NF000612">
    <property type="entry name" value="PRK00019.1"/>
    <property type="match status" value="1"/>
</dbReference>
<dbReference type="PANTHER" id="PTHR33280">
    <property type="entry name" value="50S RIBOSOMAL PROTEIN L31, CHLOROPLASTIC"/>
    <property type="match status" value="1"/>
</dbReference>
<dbReference type="PANTHER" id="PTHR33280:SF6">
    <property type="entry name" value="LARGE RIBOSOMAL SUBUNIT PROTEIN BL31A"/>
    <property type="match status" value="1"/>
</dbReference>
<dbReference type="Pfam" id="PF01197">
    <property type="entry name" value="Ribosomal_L31"/>
    <property type="match status" value="1"/>
</dbReference>
<dbReference type="PRINTS" id="PR01249">
    <property type="entry name" value="RIBOSOMALL31"/>
</dbReference>
<dbReference type="SUPFAM" id="SSF143800">
    <property type="entry name" value="L28p-like"/>
    <property type="match status" value="1"/>
</dbReference>
<dbReference type="PROSITE" id="PS01143">
    <property type="entry name" value="RIBOSOMAL_L31"/>
    <property type="match status" value="1"/>
</dbReference>
<protein>
    <recommendedName>
        <fullName evidence="1">Large ribosomal subunit protein bL31</fullName>
    </recommendedName>
    <alternativeName>
        <fullName evidence="2">50S ribosomal protein L31</fullName>
    </alternativeName>
</protein>
<gene>
    <name evidence="1" type="primary">rpmE</name>
    <name type="ordered locus">YPA_0260</name>
</gene>
<evidence type="ECO:0000255" key="1">
    <source>
        <dbReference type="HAMAP-Rule" id="MF_00501"/>
    </source>
</evidence>
<evidence type="ECO:0000305" key="2"/>
<keyword id="KW-0479">Metal-binding</keyword>
<keyword id="KW-0687">Ribonucleoprotein</keyword>
<keyword id="KW-0689">Ribosomal protein</keyword>
<keyword id="KW-0694">RNA-binding</keyword>
<keyword id="KW-0699">rRNA-binding</keyword>
<keyword id="KW-0862">Zinc</keyword>
<comment type="function">
    <text evidence="1">Binds the 23S rRNA.</text>
</comment>
<comment type="cofactor">
    <cofactor evidence="1">
        <name>Zn(2+)</name>
        <dbReference type="ChEBI" id="CHEBI:29105"/>
    </cofactor>
    <text evidence="1">Binds 1 zinc ion per subunit.</text>
</comment>
<comment type="subunit">
    <text evidence="1">Part of the 50S ribosomal subunit.</text>
</comment>
<comment type="similarity">
    <text evidence="1">Belongs to the bacterial ribosomal protein bL31 family. Type A subfamily.</text>
</comment>
<accession>Q1CBE3</accession>